<accession>Q9P4E8</accession>
<accession>A0A1D8PEM2</accession>
<accession>Q5APE2</accession>
<organism>
    <name type="scientific">Candida albicans (strain SC5314 / ATCC MYA-2876)</name>
    <name type="common">Yeast</name>
    <dbReference type="NCBI Taxonomy" id="237561"/>
    <lineage>
        <taxon>Eukaryota</taxon>
        <taxon>Fungi</taxon>
        <taxon>Dikarya</taxon>
        <taxon>Ascomycota</taxon>
        <taxon>Saccharomycotina</taxon>
        <taxon>Pichiomycetes</taxon>
        <taxon>Debaryomycetaceae</taxon>
        <taxon>Candida/Lodderomyces clade</taxon>
        <taxon>Candida</taxon>
    </lineage>
</organism>
<gene>
    <name evidence="7" type="primary">LIP6</name>
    <name type="ordered locus">CAALFM_C109600CA</name>
    <name type="ORF">CaO19.12286</name>
    <name type="ORF">CaO19.4823</name>
</gene>
<proteinExistence type="evidence at transcript level"/>
<reference key="1">
    <citation type="journal article" date="2000" name="Arch. Microbiol.">
        <title>Secreted lipases of Candida albicans: cloning, characterisation and expression analysis of a new gene family with at least ten members.</title>
        <authorList>
            <person name="Hube B."/>
            <person name="Stehr F."/>
            <person name="Bossenz M."/>
            <person name="Mazur A."/>
            <person name="Kretschmar M."/>
            <person name="Schaefer W."/>
        </authorList>
    </citation>
    <scope>NUCLEOTIDE SEQUENCE [GENOMIC DNA]</scope>
    <scope>SUBCELLULAR LOCATION</scope>
    <scope>FUNCTION</scope>
    <scope>INDUCTION</scope>
    <source>
        <strain>SC5314 / ATCC MYA-2876</strain>
    </source>
</reference>
<reference key="2">
    <citation type="journal article" date="2004" name="Proc. Natl. Acad. Sci. U.S.A.">
        <title>The diploid genome sequence of Candida albicans.</title>
        <authorList>
            <person name="Jones T."/>
            <person name="Federspiel N.A."/>
            <person name="Chibana H."/>
            <person name="Dungan J."/>
            <person name="Kalman S."/>
            <person name="Magee B.B."/>
            <person name="Newport G."/>
            <person name="Thorstenson Y.R."/>
            <person name="Agabian N."/>
            <person name="Magee P.T."/>
            <person name="Davis R.W."/>
            <person name="Scherer S."/>
        </authorList>
    </citation>
    <scope>NUCLEOTIDE SEQUENCE [LARGE SCALE GENOMIC DNA]</scope>
    <source>
        <strain>SC5314 / ATCC MYA-2876</strain>
    </source>
</reference>
<reference key="3">
    <citation type="journal article" date="2007" name="Genome Biol.">
        <title>Assembly of the Candida albicans genome into sixteen supercontigs aligned on the eight chromosomes.</title>
        <authorList>
            <person name="van het Hoog M."/>
            <person name="Rast T.J."/>
            <person name="Martchenko M."/>
            <person name="Grindle S."/>
            <person name="Dignard D."/>
            <person name="Hogues H."/>
            <person name="Cuomo C."/>
            <person name="Berriman M."/>
            <person name="Scherer S."/>
            <person name="Magee B.B."/>
            <person name="Whiteway M."/>
            <person name="Chibana H."/>
            <person name="Nantel A."/>
            <person name="Magee P.T."/>
        </authorList>
    </citation>
    <scope>GENOME REANNOTATION</scope>
    <source>
        <strain>SC5314 / ATCC MYA-2876</strain>
    </source>
</reference>
<reference key="4">
    <citation type="journal article" date="2013" name="Genome Biol.">
        <title>Assembly of a phased diploid Candida albicans genome facilitates allele-specific measurements and provides a simple model for repeat and indel structure.</title>
        <authorList>
            <person name="Muzzey D."/>
            <person name="Schwartz K."/>
            <person name="Weissman J.S."/>
            <person name="Sherlock G."/>
        </authorList>
    </citation>
    <scope>NUCLEOTIDE SEQUENCE [LARGE SCALE GENOMIC DNA]</scope>
    <scope>GENOME REANNOTATION</scope>
    <source>
        <strain>SC5314 / ATCC MYA-2876</strain>
    </source>
</reference>
<reference key="5">
    <citation type="journal article" date="2004" name="FEMS Yeast Res.">
        <title>Expression analysis of the Candida albicans lipase gene family during experimental infections and in patient samples.</title>
        <authorList>
            <person name="Stehr F."/>
            <person name="Felk A."/>
            <person name="Gacser A."/>
            <person name="Kretschmar M."/>
            <person name="Maehnss B."/>
            <person name="Neuber K."/>
            <person name="Hube B."/>
            <person name="Schaefer W."/>
        </authorList>
    </citation>
    <scope>INDUCTION</scope>
</reference>
<reference key="6">
    <citation type="journal article" date="2005" name="FEMS Microbiol. Lett.">
        <title>Differential Candida albicans lipase gene expression during alimentary tract colonization and infection.</title>
        <authorList>
            <person name="Schofield D.A."/>
            <person name="Westwater C."/>
            <person name="Warner T."/>
            <person name="Balish E."/>
        </authorList>
    </citation>
    <scope>INDUCTION</scope>
</reference>
<reference key="7">
    <citation type="journal article" date="2005" name="FEMS Microbiol. Lett.">
        <title>DNA array analysis of Candida albicans gene expression in response to adherence to polystyrene.</title>
        <authorList>
            <person name="Marchais V."/>
            <person name="Kempf M."/>
            <person name="Licznar P."/>
            <person name="Lefrancois C."/>
            <person name="Bouchara J.P."/>
            <person name="Robert R."/>
            <person name="Cottin J."/>
        </authorList>
    </citation>
    <scope>INDUCTION</scope>
</reference>
<keyword id="KW-1015">Disulfide bond</keyword>
<keyword id="KW-0325">Glycoprotein</keyword>
<keyword id="KW-0378">Hydrolase</keyword>
<keyword id="KW-0442">Lipid degradation</keyword>
<keyword id="KW-0443">Lipid metabolism</keyword>
<keyword id="KW-1185">Reference proteome</keyword>
<keyword id="KW-0964">Secreted</keyword>
<keyword id="KW-0732">Signal</keyword>
<keyword id="KW-0843">Virulence</keyword>
<name>LIP6_CANAL</name>
<dbReference type="EC" id="3.1.1.3" evidence="1"/>
<dbReference type="EMBL" id="AF191319">
    <property type="protein sequence ID" value="AAF79927.1"/>
    <property type="molecule type" value="Genomic_DNA"/>
</dbReference>
<dbReference type="EMBL" id="CP017623">
    <property type="protein sequence ID" value="AOW26592.1"/>
    <property type="molecule type" value="Genomic_DNA"/>
</dbReference>
<dbReference type="RefSeq" id="XP_723509.1">
    <property type="nucleotide sequence ID" value="XM_718416.1"/>
</dbReference>
<dbReference type="SMR" id="Q9P4E8"/>
<dbReference type="BioGRID" id="1217984">
    <property type="interactions" value="1"/>
</dbReference>
<dbReference type="STRING" id="237561.Q9P4E8"/>
<dbReference type="ESTHER" id="canal-LIP6">
    <property type="family name" value="Fungal-Bact_LIP"/>
</dbReference>
<dbReference type="GlyCosmos" id="Q9P4E8">
    <property type="glycosylation" value="2 sites, No reported glycans"/>
</dbReference>
<dbReference type="PeptideAtlas" id="Q9P4E8"/>
<dbReference type="EnsemblFungi" id="C1_09600C_A-T">
    <property type="protein sequence ID" value="C1_09600C_A-T-p1"/>
    <property type="gene ID" value="C1_09600C_A"/>
</dbReference>
<dbReference type="GeneID" id="3634890"/>
<dbReference type="KEGG" id="cal:CAALFM_C109600CA"/>
<dbReference type="CGD" id="CAL0000176920">
    <property type="gene designation" value="LIP6"/>
</dbReference>
<dbReference type="VEuPathDB" id="FungiDB:C1_09600C_A"/>
<dbReference type="eggNOG" id="ENOG502S2P7">
    <property type="taxonomic scope" value="Eukaryota"/>
</dbReference>
<dbReference type="HOGENOM" id="CLU_029538_5_0_1"/>
<dbReference type="InParanoid" id="Q9P4E8"/>
<dbReference type="OMA" id="RQYCATG"/>
<dbReference type="OrthoDB" id="2373480at2759"/>
<dbReference type="PRO" id="PR:Q9P4E8"/>
<dbReference type="Proteomes" id="UP000000559">
    <property type="component" value="Chromosome 1"/>
</dbReference>
<dbReference type="GO" id="GO:0005576">
    <property type="term" value="C:extracellular region"/>
    <property type="evidence" value="ECO:0007669"/>
    <property type="project" value="UniProtKB-SubCell"/>
</dbReference>
<dbReference type="GO" id="GO:0016298">
    <property type="term" value="F:lipase activity"/>
    <property type="evidence" value="ECO:0000314"/>
    <property type="project" value="CGD"/>
</dbReference>
<dbReference type="GO" id="GO:0004806">
    <property type="term" value="F:triacylglycerol lipase activity"/>
    <property type="evidence" value="ECO:0007669"/>
    <property type="project" value="UniProtKB-EC"/>
</dbReference>
<dbReference type="GO" id="GO:0016042">
    <property type="term" value="P:lipid catabolic process"/>
    <property type="evidence" value="ECO:0007669"/>
    <property type="project" value="UniProtKB-KW"/>
</dbReference>
<dbReference type="FunFam" id="1.10.260.130:FF:000001">
    <property type="entry name" value="Lipase 2"/>
    <property type="match status" value="1"/>
</dbReference>
<dbReference type="Gene3D" id="1.10.260.130">
    <property type="match status" value="1"/>
</dbReference>
<dbReference type="Gene3D" id="3.40.50.1820">
    <property type="entry name" value="alpha/beta hydrolase"/>
    <property type="match status" value="1"/>
</dbReference>
<dbReference type="InterPro" id="IPR029058">
    <property type="entry name" value="AB_hydrolase_fold"/>
</dbReference>
<dbReference type="InterPro" id="IPR005152">
    <property type="entry name" value="Lipase_secreted"/>
</dbReference>
<dbReference type="PANTHER" id="PTHR34853">
    <property type="match status" value="1"/>
</dbReference>
<dbReference type="PANTHER" id="PTHR34853:SF1">
    <property type="entry name" value="LIPASE 5"/>
    <property type="match status" value="1"/>
</dbReference>
<dbReference type="Pfam" id="PF03583">
    <property type="entry name" value="LIP"/>
    <property type="match status" value="1"/>
</dbReference>
<dbReference type="PIRSF" id="PIRSF029171">
    <property type="entry name" value="Esterase_LipA"/>
    <property type="match status" value="1"/>
</dbReference>
<dbReference type="SUPFAM" id="SSF53474">
    <property type="entry name" value="alpha/beta-Hydrolases"/>
    <property type="match status" value="1"/>
</dbReference>
<comment type="function">
    <text evidence="4 9">Secreted lipase that is able to hydrolyze both the neutral triacylglycerols and the monopalmitate ester Tween 40, allowing the use of hydrolyzed products as carbon sources (PubMed:11131027). Has broad lipolytic activity, which may be important for colonization and subsequent infection, therefore contributing to the persistence and virulence in human tissue (Probable).</text>
</comment>
<comment type="catalytic activity">
    <reaction evidence="1">
        <text>a triacylglycerol + H2O = a diacylglycerol + a fatty acid + H(+)</text>
        <dbReference type="Rhea" id="RHEA:12044"/>
        <dbReference type="ChEBI" id="CHEBI:15377"/>
        <dbReference type="ChEBI" id="CHEBI:15378"/>
        <dbReference type="ChEBI" id="CHEBI:17855"/>
        <dbReference type="ChEBI" id="CHEBI:18035"/>
        <dbReference type="ChEBI" id="CHEBI:28868"/>
        <dbReference type="EC" id="3.1.1.3"/>
    </reaction>
    <physiologicalReaction direction="left-to-right" evidence="1">
        <dbReference type="Rhea" id="RHEA:12045"/>
    </physiologicalReaction>
</comment>
<comment type="subcellular location">
    <subcellularLocation>
        <location evidence="4">Secreted</location>
    </subcellularLocation>
</comment>
<comment type="induction">
    <text evidence="4 5 6">Expression is induced in medium containing Tween 40 as the sole source of carbon (PubMed:11131027). Expression is up-regulated during the yeast-to-hyphal transition (PubMed:11131027). Induced during adherence to polystyrene (PubMed:15796975). Expressed during experimental infection of mice (PubMed:11131027). Expressed in host cecum and infected mucosal tissues (stomach, hard palate, esophagus and tongue) (PubMed:15766791).</text>
</comment>
<comment type="similarity">
    <text evidence="8">Belongs to the AB hydrolase superfamily. Lipase family. Class Lip subfamily.</text>
</comment>
<evidence type="ECO:0000250" key="1">
    <source>
        <dbReference type="UniProtKB" id="O94091"/>
    </source>
</evidence>
<evidence type="ECO:0000250" key="2">
    <source>
        <dbReference type="UniProtKB" id="W3VKA4"/>
    </source>
</evidence>
<evidence type="ECO:0000255" key="3"/>
<evidence type="ECO:0000269" key="4">
    <source>
    </source>
</evidence>
<evidence type="ECO:0000269" key="5">
    <source>
    </source>
</evidence>
<evidence type="ECO:0000269" key="6">
    <source>
    </source>
</evidence>
<evidence type="ECO:0000303" key="7">
    <source>
    </source>
</evidence>
<evidence type="ECO:0000305" key="8"/>
<evidence type="ECO:0000305" key="9">
    <source>
    </source>
</evidence>
<sequence length="463" mass="50480">MRDLILFLSLLHTIFASLFSLKPPSQDDFYKAPAGFKAAKPGDILKTRKSPNKPSSLYAPVDVQNSWQLLVRSEDSFGNPNAFVTTIIQPKNADPSKVVSYQNWEDASNINCSPSYGSQLGAPLSTILTQLDMTFIVPPLKSGYYVVLPDYEGPKSTFGVGRQSGKATLDSIKAVLKTKDFSGINDDAKVVLWGYSGGSFASGWAAVLQPEYAPELKDNLIGAALGGFAANLTGIAESVDGEVFSGFIPLALNGIANEYPDFKKRLYEEVKPGAKADLQKGAENCLAASLISYPMYQYFTGPRRVFEKGWSLLEDKTIGKTLEDNLLIALSKEHMPQIPIFVYHGTIDKIIPIKDSIKIYKNWCDWGIGSFEFSEDKSNGHTTETVVGAPAALTWIDARFAGKPAVEGCSFTTRASNFLYPNISESAASYFKGIYQTILRSKLGSGVTSDDVSVNGLRSLYHT</sequence>
<feature type="signal peptide" evidence="3">
    <location>
        <begin position="1"/>
        <end position="16"/>
    </location>
</feature>
<feature type="chain" id="PRO_0000017825" description="Lipase 6">
    <location>
        <begin position="17"/>
        <end position="463"/>
    </location>
</feature>
<feature type="active site" description="Charge relay system" evidence="2">
    <location>
        <position position="196"/>
    </location>
</feature>
<feature type="active site" description="Charge relay system" evidence="2">
    <location>
        <position position="348"/>
    </location>
</feature>
<feature type="active site" description="Charge relay system" evidence="2">
    <location>
        <position position="381"/>
    </location>
</feature>
<feature type="glycosylation site" description="N-linked (GlcNAc...) asparagine" evidence="3">
    <location>
        <position position="231"/>
    </location>
</feature>
<feature type="glycosylation site" description="N-linked (GlcNAc...) asparagine" evidence="3">
    <location>
        <position position="422"/>
    </location>
</feature>
<feature type="disulfide bond" evidence="2">
    <location>
        <begin position="112"/>
        <end position="285"/>
    </location>
</feature>
<feature type="disulfide bond" evidence="2">
    <location>
        <begin position="364"/>
        <end position="409"/>
    </location>
</feature>
<protein>
    <recommendedName>
        <fullName evidence="7">Lipase 6</fullName>
        <ecNumber evidence="1">3.1.1.3</ecNumber>
    </recommendedName>
</protein>